<name>ADEC_METTP</name>
<protein>
    <recommendedName>
        <fullName evidence="1">Adenine deaminase</fullName>
        <shortName evidence="1">Adenase</shortName>
        <shortName evidence="1">Adenine aminase</shortName>
        <ecNumber evidence="1">3.5.4.2</ecNumber>
    </recommendedName>
</protein>
<evidence type="ECO:0000255" key="1">
    <source>
        <dbReference type="HAMAP-Rule" id="MF_01518"/>
    </source>
</evidence>
<gene>
    <name evidence="1" type="primary">ade</name>
    <name type="ordered locus">Mthe_0522</name>
</gene>
<keyword id="KW-0378">Hydrolase</keyword>
<keyword id="KW-0464">Manganese</keyword>
<keyword id="KW-1185">Reference proteome</keyword>
<proteinExistence type="inferred from homology"/>
<reference key="1">
    <citation type="submission" date="2006-10" db="EMBL/GenBank/DDBJ databases">
        <title>Complete sequence of Methanosaeta thermophila PT.</title>
        <authorList>
            <consortium name="US DOE Joint Genome Institute"/>
            <person name="Copeland A."/>
            <person name="Lucas S."/>
            <person name="Lapidus A."/>
            <person name="Barry K."/>
            <person name="Detter J.C."/>
            <person name="Glavina del Rio T."/>
            <person name="Hammon N."/>
            <person name="Israni S."/>
            <person name="Pitluck S."/>
            <person name="Chain P."/>
            <person name="Malfatti S."/>
            <person name="Shin M."/>
            <person name="Vergez L."/>
            <person name="Schmutz J."/>
            <person name="Larimer F."/>
            <person name="Land M."/>
            <person name="Hauser L."/>
            <person name="Kyrpides N."/>
            <person name="Kim E."/>
            <person name="Smith K.S."/>
            <person name="Ingram-Smith C."/>
            <person name="Richardson P."/>
        </authorList>
    </citation>
    <scope>NUCLEOTIDE SEQUENCE [LARGE SCALE GENOMIC DNA]</scope>
    <source>
        <strain>DSM 6194 / JCM 14653 / NBRC 101360 / PT</strain>
    </source>
</reference>
<feature type="chain" id="PRO_0000292404" description="Adenine deaminase">
    <location>
        <begin position="1"/>
        <end position="567"/>
    </location>
</feature>
<dbReference type="EC" id="3.5.4.2" evidence="1"/>
<dbReference type="EMBL" id="CP000477">
    <property type="protein sequence ID" value="ABK14313.1"/>
    <property type="molecule type" value="Genomic_DNA"/>
</dbReference>
<dbReference type="RefSeq" id="WP_011695710.1">
    <property type="nucleotide sequence ID" value="NC_008553.1"/>
</dbReference>
<dbReference type="SMR" id="A0B6I9"/>
<dbReference type="STRING" id="349307.Mthe_0522"/>
<dbReference type="GeneID" id="4463435"/>
<dbReference type="KEGG" id="mtp:Mthe_0522"/>
<dbReference type="HOGENOM" id="CLU_027935_0_0_2"/>
<dbReference type="OrthoDB" id="24954at2157"/>
<dbReference type="Proteomes" id="UP000000674">
    <property type="component" value="Chromosome"/>
</dbReference>
<dbReference type="GO" id="GO:0000034">
    <property type="term" value="F:adenine deaminase activity"/>
    <property type="evidence" value="ECO:0007669"/>
    <property type="project" value="UniProtKB-UniRule"/>
</dbReference>
<dbReference type="GO" id="GO:0006146">
    <property type="term" value="P:adenine catabolic process"/>
    <property type="evidence" value="ECO:0007669"/>
    <property type="project" value="InterPro"/>
</dbReference>
<dbReference type="CDD" id="cd01295">
    <property type="entry name" value="AdeC"/>
    <property type="match status" value="1"/>
</dbReference>
<dbReference type="FunFam" id="3.20.20.140:FF:000016">
    <property type="entry name" value="Adenine deaminase"/>
    <property type="match status" value="1"/>
</dbReference>
<dbReference type="Gene3D" id="3.20.20.140">
    <property type="entry name" value="Metal-dependent hydrolases"/>
    <property type="match status" value="1"/>
</dbReference>
<dbReference type="Gene3D" id="2.30.40.10">
    <property type="entry name" value="Urease, subunit C, domain 1"/>
    <property type="match status" value="1"/>
</dbReference>
<dbReference type="HAMAP" id="MF_01518">
    <property type="entry name" value="Adenine_deamin"/>
    <property type="match status" value="1"/>
</dbReference>
<dbReference type="InterPro" id="IPR006679">
    <property type="entry name" value="Adenine_deam"/>
</dbReference>
<dbReference type="InterPro" id="IPR026912">
    <property type="entry name" value="Adenine_deam_C"/>
</dbReference>
<dbReference type="InterPro" id="IPR006680">
    <property type="entry name" value="Amidohydro-rel"/>
</dbReference>
<dbReference type="InterPro" id="IPR011059">
    <property type="entry name" value="Metal-dep_hydrolase_composite"/>
</dbReference>
<dbReference type="InterPro" id="IPR032466">
    <property type="entry name" value="Metal_Hydrolase"/>
</dbReference>
<dbReference type="NCBIfam" id="TIGR01178">
    <property type="entry name" value="ade"/>
    <property type="match status" value="1"/>
</dbReference>
<dbReference type="PANTHER" id="PTHR11113:SF2">
    <property type="entry name" value="ADENINE DEAMINASE"/>
    <property type="match status" value="1"/>
</dbReference>
<dbReference type="PANTHER" id="PTHR11113">
    <property type="entry name" value="N-ACETYLGLUCOSAMINE-6-PHOSPHATE DEACETYLASE"/>
    <property type="match status" value="1"/>
</dbReference>
<dbReference type="Pfam" id="PF13382">
    <property type="entry name" value="Adenine_deam_C"/>
    <property type="match status" value="1"/>
</dbReference>
<dbReference type="Pfam" id="PF01979">
    <property type="entry name" value="Amidohydro_1"/>
    <property type="match status" value="1"/>
</dbReference>
<dbReference type="SUPFAM" id="SSF51338">
    <property type="entry name" value="Composite domain of metallo-dependent hydrolases"/>
    <property type="match status" value="1"/>
</dbReference>
<dbReference type="SUPFAM" id="SSF51556">
    <property type="entry name" value="Metallo-dependent hydrolases"/>
    <property type="match status" value="1"/>
</dbReference>
<sequence>MRIEDLIAAARGELEADLLLEGGKLVNVFSGEIHRADISIYGGFVAGFDCPSARRVISVEDHLIAPGSIDAHVHIESSMLMPSEYARAVVPRGTLTVIADPHEIANVLGVDGISYLLRCAEGIPMRFLVTAPSCVPATHLETSGAALGVSEIASLLDDHRVVGLGEMMNYPGVIHRDKPVLAKLKVAASKNKTICGHAPGLGGRDLHAYAAALIEDDHECTRAEEAMEQLRAGICIMIREGSAARNLDELVKIIREYNTPNIMLCTDDLDPRDIVHRHIDHMIRRIIEAGTDPVAAIQMATINPARHFGLRRTGAVAPGYRADIIVMDHDFNVRRVIFEGEEVARDGRLTASFESKRLPVQTSMNVRLPITRESFRIPATGRIVRVIGVAPNQILTETIAARPEVRNGEVISDTRNDILKVAVVERHRATGNVGLGLVSGFGLKRGAIASSVSHDSHNIIVVGEDEESMVRAVESLISMGGGWVSVDGTTIASLPLPIAGLLSERRVEDVVEEAENVIAASHSLGSELEDSFMTLSFLALPVIPELRITDRGLVDVREFGHVPLFME</sequence>
<comment type="catalytic activity">
    <reaction evidence="1">
        <text>adenine + H2O + H(+) = hypoxanthine + NH4(+)</text>
        <dbReference type="Rhea" id="RHEA:23688"/>
        <dbReference type="ChEBI" id="CHEBI:15377"/>
        <dbReference type="ChEBI" id="CHEBI:15378"/>
        <dbReference type="ChEBI" id="CHEBI:16708"/>
        <dbReference type="ChEBI" id="CHEBI:17368"/>
        <dbReference type="ChEBI" id="CHEBI:28938"/>
        <dbReference type="EC" id="3.5.4.2"/>
    </reaction>
</comment>
<comment type="cofactor">
    <cofactor evidence="1">
        <name>Mn(2+)</name>
        <dbReference type="ChEBI" id="CHEBI:29035"/>
    </cofactor>
</comment>
<comment type="similarity">
    <text evidence="1">Belongs to the metallo-dependent hydrolases superfamily. Adenine deaminase family.</text>
</comment>
<organism>
    <name type="scientific">Methanothrix thermoacetophila (strain DSM 6194 / JCM 14653 / NBRC 101360 / PT)</name>
    <name type="common">Methanosaeta thermophila</name>
    <dbReference type="NCBI Taxonomy" id="349307"/>
    <lineage>
        <taxon>Archaea</taxon>
        <taxon>Methanobacteriati</taxon>
        <taxon>Methanobacteriota</taxon>
        <taxon>Stenosarchaea group</taxon>
        <taxon>Methanomicrobia</taxon>
        <taxon>Methanotrichales</taxon>
        <taxon>Methanotrichaceae</taxon>
        <taxon>Methanothrix</taxon>
    </lineage>
</organism>
<accession>A0B6I9</accession>